<comment type="similarity">
    <text evidence="1">Belongs to the UPF0179 family.</text>
</comment>
<organism>
    <name type="scientific">Halobacterium salinarum (strain ATCC 700922 / JCM 11081 / NRC-1)</name>
    <name type="common">Halobacterium halobium</name>
    <dbReference type="NCBI Taxonomy" id="64091"/>
    <lineage>
        <taxon>Archaea</taxon>
        <taxon>Methanobacteriati</taxon>
        <taxon>Methanobacteriota</taxon>
        <taxon>Stenosarchaea group</taxon>
        <taxon>Halobacteria</taxon>
        <taxon>Halobacteriales</taxon>
        <taxon>Halobacteriaceae</taxon>
        <taxon>Halobacterium</taxon>
        <taxon>Halobacterium salinarum NRC-34001</taxon>
    </lineage>
</organism>
<accession>Q9HPZ6</accession>
<name>Y1401_HALSA</name>
<evidence type="ECO:0000305" key="1"/>
<dbReference type="EMBL" id="AE004437">
    <property type="protein sequence ID" value="AAG19721.1"/>
    <property type="molecule type" value="Genomic_DNA"/>
</dbReference>
<dbReference type="PIR" id="E84294">
    <property type="entry name" value="E84294"/>
</dbReference>
<dbReference type="RefSeq" id="WP_010903018.1">
    <property type="nucleotide sequence ID" value="NC_002607.1"/>
</dbReference>
<dbReference type="FunCoup" id="Q9HPZ6">
    <property type="interactions" value="4"/>
</dbReference>
<dbReference type="STRING" id="64091.VNG_1401C"/>
<dbReference type="PaxDb" id="64091-VNG_1401C"/>
<dbReference type="KEGG" id="hal:VNG_1401C"/>
<dbReference type="PATRIC" id="fig|64091.14.peg.1070"/>
<dbReference type="HOGENOM" id="CLU_121764_0_0_2"/>
<dbReference type="InParanoid" id="Q9HPZ6"/>
<dbReference type="OrthoDB" id="24613at2157"/>
<dbReference type="PhylomeDB" id="Q9HPZ6"/>
<dbReference type="Proteomes" id="UP000000554">
    <property type="component" value="Chromosome"/>
</dbReference>
<dbReference type="HAMAP" id="MF_00498">
    <property type="entry name" value="UPF0179"/>
    <property type="match status" value="1"/>
</dbReference>
<dbReference type="InterPro" id="IPR005369">
    <property type="entry name" value="UPF0179"/>
</dbReference>
<dbReference type="PANTHER" id="PTHR40699">
    <property type="entry name" value="UPF0179 PROTEIN MJ1627"/>
    <property type="match status" value="1"/>
</dbReference>
<dbReference type="PANTHER" id="PTHR40699:SF1">
    <property type="entry name" value="UPF0179 PROTEIN MJ1627"/>
    <property type="match status" value="1"/>
</dbReference>
<dbReference type="Pfam" id="PF03684">
    <property type="entry name" value="UPF0179"/>
    <property type="match status" value="1"/>
</dbReference>
<dbReference type="PIRSF" id="PIRSF006595">
    <property type="entry name" value="UCP006595"/>
    <property type="match status" value="1"/>
</dbReference>
<keyword id="KW-1185">Reference proteome</keyword>
<sequence length="148" mass="15824">MPITLLGPRLADPGTEFVYHGPADDCEGCPYRQQCLNLTEGVRYEVTDVREGGQVLDCAVHDEGAVAVDVEPTTIPATVPSKGAYAGSKGKLAGPCPHTECPSHEFCEPAGASFDTEYQIAEIDGEPPHDHCALDRDLTLVEFAPAER</sequence>
<proteinExistence type="inferred from homology"/>
<protein>
    <recommendedName>
        <fullName>UPF0179 protein VNG_1401C</fullName>
    </recommendedName>
</protein>
<feature type="chain" id="PRO_0000156869" description="UPF0179 protein VNG_1401C">
    <location>
        <begin position="1"/>
        <end position="148"/>
    </location>
</feature>
<gene>
    <name type="ordered locus">VNG_1401C</name>
</gene>
<reference key="1">
    <citation type="journal article" date="2000" name="Proc. Natl. Acad. Sci. U.S.A.">
        <title>Genome sequence of Halobacterium species NRC-1.</title>
        <authorList>
            <person name="Ng W.V."/>
            <person name="Kennedy S.P."/>
            <person name="Mahairas G.G."/>
            <person name="Berquist B."/>
            <person name="Pan M."/>
            <person name="Shukla H.D."/>
            <person name="Lasky S.R."/>
            <person name="Baliga N.S."/>
            <person name="Thorsson V."/>
            <person name="Sbrogna J."/>
            <person name="Swartzell S."/>
            <person name="Weir D."/>
            <person name="Hall J."/>
            <person name="Dahl T.A."/>
            <person name="Welti R."/>
            <person name="Goo Y.A."/>
            <person name="Leithauser B."/>
            <person name="Keller K."/>
            <person name="Cruz R."/>
            <person name="Danson M.J."/>
            <person name="Hough D.W."/>
            <person name="Maddocks D.G."/>
            <person name="Jablonski P.E."/>
            <person name="Krebs M.P."/>
            <person name="Angevine C.M."/>
            <person name="Dale H."/>
            <person name="Isenbarger T.A."/>
            <person name="Peck R.F."/>
            <person name="Pohlschroder M."/>
            <person name="Spudich J.L."/>
            <person name="Jung K.-H."/>
            <person name="Alam M."/>
            <person name="Freitas T."/>
            <person name="Hou S."/>
            <person name="Daniels C.J."/>
            <person name="Dennis P.P."/>
            <person name="Omer A.D."/>
            <person name="Ebhardt H."/>
            <person name="Lowe T.M."/>
            <person name="Liang P."/>
            <person name="Riley M."/>
            <person name="Hood L."/>
            <person name="DasSarma S."/>
        </authorList>
    </citation>
    <scope>NUCLEOTIDE SEQUENCE [LARGE SCALE GENOMIC DNA]</scope>
    <source>
        <strain>ATCC 700922 / JCM 11081 / NRC-1</strain>
    </source>
</reference>